<accession>P0CM70</accession>
<accession>Q55HI5</accession>
<accession>Q5K723</accession>
<evidence type="ECO:0000250" key="1"/>
<evidence type="ECO:0000250" key="2">
    <source>
        <dbReference type="UniProtKB" id="P38824"/>
    </source>
</evidence>
<evidence type="ECO:0000255" key="3"/>
<evidence type="ECO:0000255" key="4">
    <source>
        <dbReference type="PROSITE-ProRule" id="PRU01150"/>
    </source>
</evidence>
<evidence type="ECO:0000256" key="5">
    <source>
        <dbReference type="SAM" id="MobiDB-lite"/>
    </source>
</evidence>
<evidence type="ECO:0000305" key="6"/>
<sequence>MATQVPPSTTPTPFANRPAPPTKDLEIPEDYKKTFRGRGTVSKFVDPCEAARKASLDCLERTQYNRSECTDFFTAYKECKGNWLAQRKEDRMKGRDTV</sequence>
<protein>
    <recommendedName>
        <fullName>Cytochrome c oxidase-assembly factor COX23, mitochondrial</fullName>
    </recommendedName>
</protein>
<comment type="function">
    <text evidence="2">Required for the assembly of cytochrome c oxidase.</text>
</comment>
<comment type="subcellular location">
    <subcellularLocation>
        <location evidence="1">Mitochondrion intermembrane space</location>
    </subcellularLocation>
</comment>
<comment type="similarity">
    <text evidence="6">Belongs to the COX23 family.</text>
</comment>
<keyword id="KW-1015">Disulfide bond</keyword>
<keyword id="KW-0496">Mitochondrion</keyword>
<keyword id="KW-1185">Reference proteome</keyword>
<keyword id="KW-0809">Transit peptide</keyword>
<gene>
    <name type="primary">COX23</name>
    <name type="ordered locus">CNN01390</name>
</gene>
<dbReference type="EMBL" id="AE017356">
    <property type="protein sequence ID" value="AAW47084.1"/>
    <property type="molecule type" value="Genomic_DNA"/>
</dbReference>
<dbReference type="RefSeq" id="XP_568601.1">
    <property type="nucleotide sequence ID" value="XM_568601.1"/>
</dbReference>
<dbReference type="SMR" id="P0CM70"/>
<dbReference type="STRING" id="214684.P0CM70"/>
<dbReference type="PaxDb" id="214684-P0CM70"/>
<dbReference type="EnsemblFungi" id="AAW47084">
    <property type="protein sequence ID" value="AAW47084"/>
    <property type="gene ID" value="CNN01390"/>
</dbReference>
<dbReference type="GeneID" id="3255493"/>
<dbReference type="KEGG" id="cne:CNN01390"/>
<dbReference type="VEuPathDB" id="FungiDB:CNN01390"/>
<dbReference type="eggNOG" id="KOG4618">
    <property type="taxonomic scope" value="Eukaryota"/>
</dbReference>
<dbReference type="HOGENOM" id="CLU_157422_2_0_1"/>
<dbReference type="InParanoid" id="P0CM70"/>
<dbReference type="OMA" id="GGDRDMC"/>
<dbReference type="OrthoDB" id="9971592at2759"/>
<dbReference type="Proteomes" id="UP000002149">
    <property type="component" value="Chromosome 14"/>
</dbReference>
<dbReference type="GO" id="GO:0005758">
    <property type="term" value="C:mitochondrial intermembrane space"/>
    <property type="evidence" value="ECO:0007669"/>
    <property type="project" value="UniProtKB-SubCell"/>
</dbReference>
<dbReference type="GO" id="GO:0005739">
    <property type="term" value="C:mitochondrion"/>
    <property type="evidence" value="ECO:0000318"/>
    <property type="project" value="GO_Central"/>
</dbReference>
<dbReference type="GO" id="GO:0033108">
    <property type="term" value="P:mitochondrial respiratory chain complex assembly"/>
    <property type="evidence" value="ECO:0000318"/>
    <property type="project" value="GO_Central"/>
</dbReference>
<dbReference type="Gene3D" id="1.10.287.1130">
    <property type="entry name" value="CytochromE C oxidase copper chaperone"/>
    <property type="match status" value="1"/>
</dbReference>
<dbReference type="InterPro" id="IPR051040">
    <property type="entry name" value="COX23"/>
</dbReference>
<dbReference type="InterPro" id="IPR009069">
    <property type="entry name" value="Cys_alpha_HP_mot_SF"/>
</dbReference>
<dbReference type="PANTHER" id="PTHR46811">
    <property type="entry name" value="COILED-COIL-HELIX-COILED-COIL-HELIX DOMAIN-CONTAINING PROTEIN 7"/>
    <property type="match status" value="1"/>
</dbReference>
<dbReference type="PANTHER" id="PTHR46811:SF1">
    <property type="entry name" value="COILED-COIL-HELIX-COILED-COIL-HELIX DOMAIN-CONTAINING PROTEIN 7"/>
    <property type="match status" value="1"/>
</dbReference>
<dbReference type="SUPFAM" id="SSF47072">
    <property type="entry name" value="Cysteine alpha-hairpin motif"/>
    <property type="match status" value="1"/>
</dbReference>
<dbReference type="PROSITE" id="PS51808">
    <property type="entry name" value="CHCH"/>
    <property type="match status" value="1"/>
</dbReference>
<reference key="1">
    <citation type="journal article" date="2005" name="Science">
        <title>The genome of the basidiomycetous yeast and human pathogen Cryptococcus neoformans.</title>
        <authorList>
            <person name="Loftus B.J."/>
            <person name="Fung E."/>
            <person name="Roncaglia P."/>
            <person name="Rowley D."/>
            <person name="Amedeo P."/>
            <person name="Bruno D."/>
            <person name="Vamathevan J."/>
            <person name="Miranda M."/>
            <person name="Anderson I.J."/>
            <person name="Fraser J.A."/>
            <person name="Allen J.E."/>
            <person name="Bosdet I.E."/>
            <person name="Brent M.R."/>
            <person name="Chiu R."/>
            <person name="Doering T.L."/>
            <person name="Donlin M.J."/>
            <person name="D'Souza C.A."/>
            <person name="Fox D.S."/>
            <person name="Grinberg V."/>
            <person name="Fu J."/>
            <person name="Fukushima M."/>
            <person name="Haas B.J."/>
            <person name="Huang J.C."/>
            <person name="Janbon G."/>
            <person name="Jones S.J.M."/>
            <person name="Koo H.L."/>
            <person name="Krzywinski M.I."/>
            <person name="Kwon-Chung K.J."/>
            <person name="Lengeler K.B."/>
            <person name="Maiti R."/>
            <person name="Marra M.A."/>
            <person name="Marra R.E."/>
            <person name="Mathewson C.A."/>
            <person name="Mitchell T.G."/>
            <person name="Pertea M."/>
            <person name="Riggs F.R."/>
            <person name="Salzberg S.L."/>
            <person name="Schein J.E."/>
            <person name="Shvartsbeyn A."/>
            <person name="Shin H."/>
            <person name="Shumway M."/>
            <person name="Specht C.A."/>
            <person name="Suh B.B."/>
            <person name="Tenney A."/>
            <person name="Utterback T.R."/>
            <person name="Wickes B.L."/>
            <person name="Wortman J.R."/>
            <person name="Wye N.H."/>
            <person name="Kronstad J.W."/>
            <person name="Lodge J.K."/>
            <person name="Heitman J."/>
            <person name="Davis R.W."/>
            <person name="Fraser C.M."/>
            <person name="Hyman R.W."/>
        </authorList>
    </citation>
    <scope>NUCLEOTIDE SEQUENCE [LARGE SCALE GENOMIC DNA]</scope>
    <source>
        <strain>JEC21 / ATCC MYA-565</strain>
    </source>
</reference>
<feature type="transit peptide" description="Mitochondrion" evidence="3">
    <location>
        <begin position="1"/>
        <end position="18"/>
    </location>
</feature>
<feature type="chain" id="PRO_0000280660" description="Cytochrome c oxidase-assembly factor COX23, mitochondrial">
    <location>
        <begin position="19"/>
        <end position="98"/>
    </location>
</feature>
<feature type="domain" description="CHCH" evidence="4">
    <location>
        <begin position="45"/>
        <end position="87"/>
    </location>
</feature>
<feature type="region of interest" description="Disordered" evidence="5">
    <location>
        <begin position="1"/>
        <end position="27"/>
    </location>
</feature>
<feature type="short sequence motif" description="Cx9C motif 1" evidence="4">
    <location>
        <begin position="48"/>
        <end position="58"/>
    </location>
</feature>
<feature type="short sequence motif" description="Cx9C motif 2" evidence="4">
    <location>
        <begin position="69"/>
        <end position="79"/>
    </location>
</feature>
<feature type="compositionally biased region" description="Polar residues" evidence="5">
    <location>
        <begin position="1"/>
        <end position="13"/>
    </location>
</feature>
<feature type="disulfide bond" evidence="4">
    <location>
        <begin position="48"/>
        <end position="79"/>
    </location>
</feature>
<feature type="disulfide bond" evidence="4">
    <location>
        <begin position="58"/>
        <end position="69"/>
    </location>
</feature>
<proteinExistence type="inferred from homology"/>
<organism>
    <name type="scientific">Cryptococcus neoformans var. neoformans serotype D (strain JEC21 / ATCC MYA-565)</name>
    <name type="common">Filobasidiella neoformans</name>
    <dbReference type="NCBI Taxonomy" id="214684"/>
    <lineage>
        <taxon>Eukaryota</taxon>
        <taxon>Fungi</taxon>
        <taxon>Dikarya</taxon>
        <taxon>Basidiomycota</taxon>
        <taxon>Agaricomycotina</taxon>
        <taxon>Tremellomycetes</taxon>
        <taxon>Tremellales</taxon>
        <taxon>Cryptococcaceae</taxon>
        <taxon>Cryptococcus</taxon>
        <taxon>Cryptococcus neoformans species complex</taxon>
    </lineage>
</organism>
<name>COX23_CRYNJ</name>